<name>MATP_ECOSE</name>
<dbReference type="EMBL" id="AP009240">
    <property type="protein sequence ID" value="BAG76541.1"/>
    <property type="molecule type" value="Genomic_DNA"/>
</dbReference>
<dbReference type="RefSeq" id="WP_000877161.1">
    <property type="nucleotide sequence ID" value="NC_011415.1"/>
</dbReference>
<dbReference type="SMR" id="B6I930"/>
<dbReference type="GeneID" id="93776458"/>
<dbReference type="KEGG" id="ecy:ECSE_1017"/>
<dbReference type="HOGENOM" id="CLU_142157_0_0_6"/>
<dbReference type="Proteomes" id="UP000008199">
    <property type="component" value="Chromosome"/>
</dbReference>
<dbReference type="GO" id="GO:0005737">
    <property type="term" value="C:cytoplasm"/>
    <property type="evidence" value="ECO:0007669"/>
    <property type="project" value="UniProtKB-SubCell"/>
</dbReference>
<dbReference type="GO" id="GO:0043565">
    <property type="term" value="F:sequence-specific DNA binding"/>
    <property type="evidence" value="ECO:0007669"/>
    <property type="project" value="UniProtKB-UniRule"/>
</dbReference>
<dbReference type="GO" id="GO:0051301">
    <property type="term" value="P:cell division"/>
    <property type="evidence" value="ECO:0007669"/>
    <property type="project" value="UniProtKB-UniRule"/>
</dbReference>
<dbReference type="GO" id="GO:0006355">
    <property type="term" value="P:regulation of DNA-templated transcription"/>
    <property type="evidence" value="ECO:0007669"/>
    <property type="project" value="InterPro"/>
</dbReference>
<dbReference type="FunFam" id="1.10.1220.10:FF:000004">
    <property type="entry name" value="Macrodomain Ter protein"/>
    <property type="match status" value="1"/>
</dbReference>
<dbReference type="FunFam" id="1.20.1270.380:FF:000001">
    <property type="entry name" value="Macrodomain Ter protein"/>
    <property type="match status" value="1"/>
</dbReference>
<dbReference type="Gene3D" id="1.20.1270.380">
    <property type="entry name" value="MatP, N-terminal domain"/>
    <property type="match status" value="1"/>
</dbReference>
<dbReference type="Gene3D" id="1.10.1220.10">
    <property type="entry name" value="Met repressor-like"/>
    <property type="match status" value="1"/>
</dbReference>
<dbReference type="HAMAP" id="MF_01073">
    <property type="entry name" value="MatP"/>
    <property type="match status" value="1"/>
</dbReference>
<dbReference type="InterPro" id="IPR013321">
    <property type="entry name" value="Arc_rbn_hlx_hlx"/>
</dbReference>
<dbReference type="InterPro" id="IPR009390">
    <property type="entry name" value="MatP"/>
</dbReference>
<dbReference type="InterPro" id="IPR035375">
    <property type="entry name" value="MatP_C"/>
</dbReference>
<dbReference type="InterPro" id="IPR035087">
    <property type="entry name" value="MatP_N"/>
</dbReference>
<dbReference type="InterPro" id="IPR038339">
    <property type="entry name" value="MatP_N_sf"/>
</dbReference>
<dbReference type="NCBIfam" id="NF003471">
    <property type="entry name" value="PRK05097.1"/>
    <property type="match status" value="1"/>
</dbReference>
<dbReference type="Pfam" id="PF06303">
    <property type="entry name" value="MatP"/>
    <property type="match status" value="1"/>
</dbReference>
<dbReference type="Pfam" id="PF17414">
    <property type="entry name" value="MatP_C"/>
    <property type="match status" value="1"/>
</dbReference>
<sequence length="150" mass="17693">MKYQQLENLESGWKWKYLVKKHREGELITRYIEASAAQEAVDVLLSLENEPVLVNGWIDKHMNPELVNRMKQTIRARRKRHFNAEHQHTRKKSIDLEFIVWQRLAGLAQRRGKTLSETIVQLIEDAENKEKYANKMSSLKQDLQALLGKE</sequence>
<organism>
    <name type="scientific">Escherichia coli (strain SE11)</name>
    <dbReference type="NCBI Taxonomy" id="409438"/>
    <lineage>
        <taxon>Bacteria</taxon>
        <taxon>Pseudomonadati</taxon>
        <taxon>Pseudomonadota</taxon>
        <taxon>Gammaproteobacteria</taxon>
        <taxon>Enterobacterales</taxon>
        <taxon>Enterobacteriaceae</taxon>
        <taxon>Escherichia</taxon>
    </lineage>
</organism>
<gene>
    <name evidence="1" type="primary">matP</name>
    <name type="ordered locus">ECSE_1017</name>
</gene>
<accession>B6I930</accession>
<evidence type="ECO:0000255" key="1">
    <source>
        <dbReference type="HAMAP-Rule" id="MF_01073"/>
    </source>
</evidence>
<protein>
    <recommendedName>
        <fullName evidence="1">Macrodomain Ter protein</fullName>
    </recommendedName>
</protein>
<reference key="1">
    <citation type="journal article" date="2008" name="DNA Res.">
        <title>Complete genome sequence and comparative analysis of the wild-type commensal Escherichia coli strain SE11 isolated from a healthy adult.</title>
        <authorList>
            <person name="Oshima K."/>
            <person name="Toh H."/>
            <person name="Ogura Y."/>
            <person name="Sasamoto H."/>
            <person name="Morita H."/>
            <person name="Park S.-H."/>
            <person name="Ooka T."/>
            <person name="Iyoda S."/>
            <person name="Taylor T.D."/>
            <person name="Hayashi T."/>
            <person name="Itoh K."/>
            <person name="Hattori M."/>
        </authorList>
    </citation>
    <scope>NUCLEOTIDE SEQUENCE [LARGE SCALE GENOMIC DNA]</scope>
    <source>
        <strain>SE11</strain>
    </source>
</reference>
<proteinExistence type="inferred from homology"/>
<feature type="chain" id="PRO_1000136668" description="Macrodomain Ter protein">
    <location>
        <begin position="1"/>
        <end position="150"/>
    </location>
</feature>
<comment type="function">
    <text evidence="1">Required for spatial organization of the terminus region of the chromosome (Ter macrodomain) during the cell cycle. Prevents early segregation of duplicated Ter macrodomains during cell division. Binds specifically to matS, which is a 13 bp signature motif repeated within the Ter macrodomain.</text>
</comment>
<comment type="subunit">
    <text evidence="1">Homodimer.</text>
</comment>
<comment type="subcellular location">
    <subcellularLocation>
        <location evidence="1">Cytoplasm</location>
    </subcellularLocation>
</comment>
<comment type="similarity">
    <text evidence="1">Belongs to the MatP family.</text>
</comment>
<keyword id="KW-0131">Cell cycle</keyword>
<keyword id="KW-0132">Cell division</keyword>
<keyword id="KW-0963">Cytoplasm</keyword>
<keyword id="KW-0238">DNA-binding</keyword>